<dbReference type="EC" id="3.2.1.18"/>
<dbReference type="EMBL" id="CR857339">
    <property type="protein sequence ID" value="CAH89635.1"/>
    <property type="molecule type" value="mRNA"/>
</dbReference>
<dbReference type="EMBL" id="CR859063">
    <property type="protein sequence ID" value="CAH91256.1"/>
    <property type="molecule type" value="mRNA"/>
</dbReference>
<dbReference type="EMBL" id="CR859212">
    <property type="protein sequence ID" value="CAH91396.1"/>
    <property type="molecule type" value="mRNA"/>
</dbReference>
<dbReference type="RefSeq" id="NP_001125743.1">
    <molecule id="Q5RAF4-1"/>
    <property type="nucleotide sequence ID" value="NM_001132271.1"/>
</dbReference>
<dbReference type="RefSeq" id="NP_001128939.1">
    <property type="nucleotide sequence ID" value="NM_001135467.1"/>
</dbReference>
<dbReference type="SMR" id="Q5RAF4"/>
<dbReference type="FunCoup" id="Q5RAF4">
    <property type="interactions" value="267"/>
</dbReference>
<dbReference type="CAZy" id="GH33">
    <property type="family name" value="Glycoside Hydrolase Family 33"/>
</dbReference>
<dbReference type="GlyCosmos" id="Q5RAF4">
    <property type="glycosylation" value="3 sites, No reported glycans"/>
</dbReference>
<dbReference type="GeneID" id="100172668"/>
<dbReference type="KEGG" id="pon:100172668"/>
<dbReference type="CTD" id="4758"/>
<dbReference type="InParanoid" id="Q5RAF4"/>
<dbReference type="OrthoDB" id="2739686at2759"/>
<dbReference type="Proteomes" id="UP000001595">
    <property type="component" value="Unplaced"/>
</dbReference>
<dbReference type="GO" id="GO:0031410">
    <property type="term" value="C:cytoplasmic vesicle"/>
    <property type="evidence" value="ECO:0007669"/>
    <property type="project" value="UniProtKB-KW"/>
</dbReference>
<dbReference type="GO" id="GO:0043202">
    <property type="term" value="C:lysosomal lumen"/>
    <property type="evidence" value="ECO:0007669"/>
    <property type="project" value="UniProtKB-SubCell"/>
</dbReference>
<dbReference type="GO" id="GO:0005765">
    <property type="term" value="C:lysosomal membrane"/>
    <property type="evidence" value="ECO:0007669"/>
    <property type="project" value="UniProtKB-SubCell"/>
</dbReference>
<dbReference type="GO" id="GO:0005764">
    <property type="term" value="C:lysosome"/>
    <property type="evidence" value="ECO:0000250"/>
    <property type="project" value="UniProtKB"/>
</dbReference>
<dbReference type="GO" id="GO:0005886">
    <property type="term" value="C:plasma membrane"/>
    <property type="evidence" value="ECO:0007669"/>
    <property type="project" value="UniProtKB-SubCell"/>
</dbReference>
<dbReference type="GO" id="GO:0004308">
    <property type="term" value="F:exo-alpha-sialidase activity"/>
    <property type="evidence" value="ECO:0000250"/>
    <property type="project" value="UniProtKB"/>
</dbReference>
<dbReference type="GO" id="GO:0006689">
    <property type="term" value="P:ganglioside catabolic process"/>
    <property type="evidence" value="ECO:0007669"/>
    <property type="project" value="TreeGrafter"/>
</dbReference>
<dbReference type="GO" id="GO:0009313">
    <property type="term" value="P:oligosaccharide catabolic process"/>
    <property type="evidence" value="ECO:0000250"/>
    <property type="project" value="UniProtKB"/>
</dbReference>
<dbReference type="CDD" id="cd15482">
    <property type="entry name" value="Sialidase_non-viral"/>
    <property type="match status" value="1"/>
</dbReference>
<dbReference type="FunFam" id="2.120.10.10:FF:000003">
    <property type="entry name" value="Neuraminidase 1"/>
    <property type="match status" value="1"/>
</dbReference>
<dbReference type="Gene3D" id="2.120.10.10">
    <property type="match status" value="1"/>
</dbReference>
<dbReference type="InterPro" id="IPR011040">
    <property type="entry name" value="Sialidase"/>
</dbReference>
<dbReference type="InterPro" id="IPR026856">
    <property type="entry name" value="Sialidase_fam"/>
</dbReference>
<dbReference type="InterPro" id="IPR036278">
    <property type="entry name" value="Sialidase_sf"/>
</dbReference>
<dbReference type="PANTHER" id="PTHR10628">
    <property type="entry name" value="SIALIDASE"/>
    <property type="match status" value="1"/>
</dbReference>
<dbReference type="PANTHER" id="PTHR10628:SF25">
    <property type="entry name" value="SIALIDASE-1"/>
    <property type="match status" value="1"/>
</dbReference>
<dbReference type="Pfam" id="PF13088">
    <property type="entry name" value="BNR_2"/>
    <property type="match status" value="1"/>
</dbReference>
<dbReference type="SUPFAM" id="SSF50939">
    <property type="entry name" value="Sialidases"/>
    <property type="match status" value="1"/>
</dbReference>
<keyword id="KW-0025">Alternative splicing</keyword>
<keyword id="KW-0119">Carbohydrate metabolism</keyword>
<keyword id="KW-1003">Cell membrane</keyword>
<keyword id="KW-0968">Cytoplasmic vesicle</keyword>
<keyword id="KW-0325">Glycoprotein</keyword>
<keyword id="KW-0326">Glycosidase</keyword>
<keyword id="KW-0378">Hydrolase</keyword>
<keyword id="KW-0442">Lipid degradation</keyword>
<keyword id="KW-0443">Lipid metabolism</keyword>
<keyword id="KW-0458">Lysosome</keyword>
<keyword id="KW-0472">Membrane</keyword>
<keyword id="KW-0597">Phosphoprotein</keyword>
<keyword id="KW-1185">Reference proteome</keyword>
<keyword id="KW-0677">Repeat</keyword>
<keyword id="KW-0732">Signal</keyword>
<sequence length="415" mass="45467">MTGERPSTALPDRRWGPRILGFWGGCRVWVFAAIFLLLSLAASWSKAENDFGLVQPLVTMEQLLWVSGRQIGSVDTFRIPLITATPRGTLLAFAEARKMSSSDEGAKFIALRRSMDQGSTWSPTAFIVNDGDVPDGLNLGAVVSDVETGVVFLFYSLCAHKAGCQVASTMLVWSKDDGVSWSTPRNLSLDIGTEVFAPGPGSGIQKQREPRKGRLIVCGHGTLERDGVFCLLSDDHGASWRYGSGVSGIPYGQPKQENDFNPDECQPYELPDGSVVINARNQNNYHCHCRIVLRSYDACDTLRPRDVTFDPELVDPVVAAGAVVTSSGIVFFSNPAHPEFRVNLTLRWSFSNGTSWRKETVQLWPGPSGYSSLATLEGSMDGEEQAPQLYVLYEKGRNHYTESISVAKISVYGTL</sequence>
<proteinExistence type="evidence at transcript level"/>
<protein>
    <recommendedName>
        <fullName>Sialidase-1</fullName>
        <ecNumber>3.2.1.18</ecNumber>
    </recommendedName>
    <alternativeName>
        <fullName>Acetylneuraminyl hydrolase</fullName>
    </alternativeName>
    <alternativeName>
        <fullName>Lysosomal sialidase</fullName>
    </alternativeName>
    <alternativeName>
        <fullName>N-acetyl-alpha-neuraminidase 1</fullName>
    </alternativeName>
</protein>
<gene>
    <name type="primary">NEU1</name>
</gene>
<feature type="signal peptide" evidence="1">
    <location>
        <begin position="1"/>
        <end position="47"/>
    </location>
</feature>
<feature type="chain" id="PRO_0000304728" description="Sialidase-1">
    <location>
        <begin position="48"/>
        <end position="415"/>
    </location>
</feature>
<feature type="repeat" description="BNR 1">
    <location>
        <begin position="112"/>
        <end position="123"/>
    </location>
</feature>
<feature type="repeat" description="BNR 2">
    <location>
        <begin position="172"/>
        <end position="183"/>
    </location>
</feature>
<feature type="repeat" description="BNR 3">
    <location>
        <begin position="231"/>
        <end position="242"/>
    </location>
</feature>
<feature type="repeat" description="BNR 4">
    <location>
        <begin position="347"/>
        <end position="358"/>
    </location>
</feature>
<feature type="short sequence motif" description="FRIP motif">
    <location>
        <begin position="77"/>
        <end position="80"/>
    </location>
</feature>
<feature type="short sequence motif" description="Internalization signal">
    <location>
        <begin position="412"/>
        <end position="415"/>
    </location>
</feature>
<feature type="active site" description="Proton acceptor" evidence="1">
    <location>
        <position position="103"/>
    </location>
</feature>
<feature type="active site" description="Nucleophile" evidence="1">
    <location>
        <position position="370"/>
    </location>
</feature>
<feature type="active site" evidence="2">
    <location>
        <position position="394"/>
    </location>
</feature>
<feature type="binding site" evidence="1">
    <location>
        <position position="78"/>
    </location>
    <ligand>
        <name>substrate</name>
    </ligand>
</feature>
<feature type="binding site" evidence="1">
    <location>
        <position position="97"/>
    </location>
    <ligand>
        <name>substrate</name>
    </ligand>
</feature>
<feature type="binding site" evidence="1">
    <location>
        <position position="264"/>
    </location>
    <ligand>
        <name>substrate</name>
    </ligand>
</feature>
<feature type="binding site" evidence="1">
    <location>
        <position position="280"/>
    </location>
    <ligand>
        <name>substrate</name>
    </ligand>
</feature>
<feature type="binding site" evidence="1">
    <location>
        <position position="341"/>
    </location>
    <ligand>
        <name>substrate</name>
    </ligand>
</feature>
<feature type="glycosylation site" description="N-linked (GlcNAc...) asparagine" evidence="2">
    <location>
        <position position="186"/>
    </location>
</feature>
<feature type="glycosylation site" description="N-linked (GlcNAc...) asparagine" evidence="2">
    <location>
        <position position="343"/>
    </location>
</feature>
<feature type="glycosylation site" description="N-linked (GlcNAc...) asparagine" evidence="2">
    <location>
        <position position="352"/>
    </location>
</feature>
<feature type="splice variant" id="VSP_028119" description="In isoform 2." evidence="3">
    <location>
        <begin position="267"/>
        <end position="414"/>
    </location>
</feature>
<feature type="sequence conflict" description="In Ref. 1; CAH89635/CAH91396." evidence="4" ref="1">
    <original>R</original>
    <variation>Q</variation>
    <location>
        <position position="5"/>
    </location>
</feature>
<feature type="sequence conflict" description="In Ref. 1; CAH89635/CAH91396." evidence="4" ref="1">
    <original>D</original>
    <variation>G</variation>
    <location>
        <position position="12"/>
    </location>
</feature>
<feature type="sequence conflict" description="In Ref. 1; CAH89635/CAH91396." evidence="4" ref="1">
    <original>W</original>
    <variation>R</variation>
    <location>
        <position position="29"/>
    </location>
</feature>
<feature type="sequence conflict" description="In Ref. 1; CAH91396." evidence="4" ref="1">
    <original>L</original>
    <variation>P</variation>
    <location>
        <position position="57"/>
    </location>
</feature>
<feature type="sequence conflict" description="In Ref. 1; CAH89635/CAH91396." evidence="4" ref="1">
    <original>Q</original>
    <variation>H</variation>
    <location>
        <position position="256"/>
    </location>
</feature>
<feature type="sequence conflict" description="In Ref. 1; CAH89635." evidence="4" ref="1">
    <original>L</original>
    <variation>P</variation>
    <location>
        <position position="344"/>
    </location>
</feature>
<feature type="sequence conflict" description="In Ref. 1; CAH89635." evidence="4" ref="1">
    <original>V</original>
    <variation>M</variation>
    <location>
        <position position="406"/>
    </location>
</feature>
<evidence type="ECO:0000250" key="1"/>
<evidence type="ECO:0000255" key="2"/>
<evidence type="ECO:0000303" key="3">
    <source ref="1"/>
</evidence>
<evidence type="ECO:0000305" key="4"/>
<name>NEUR1_PONAB</name>
<organism>
    <name type="scientific">Pongo abelii</name>
    <name type="common">Sumatran orangutan</name>
    <name type="synonym">Pongo pygmaeus abelii</name>
    <dbReference type="NCBI Taxonomy" id="9601"/>
    <lineage>
        <taxon>Eukaryota</taxon>
        <taxon>Metazoa</taxon>
        <taxon>Chordata</taxon>
        <taxon>Craniata</taxon>
        <taxon>Vertebrata</taxon>
        <taxon>Euteleostomi</taxon>
        <taxon>Mammalia</taxon>
        <taxon>Eutheria</taxon>
        <taxon>Euarchontoglires</taxon>
        <taxon>Primates</taxon>
        <taxon>Haplorrhini</taxon>
        <taxon>Catarrhini</taxon>
        <taxon>Hominidae</taxon>
        <taxon>Pongo</taxon>
    </lineage>
</organism>
<comment type="function">
    <text evidence="1">Catalyzes the removal of sialic acid (N-acetylneuraminic acid) moieties from glycoproteins and glycolipids. To be active, it is strictly dependent on its presence in the multienzyme complex. Appears to have a preference for alpha 2-3 and alpha 2-6 sialyl linkage (By similarity).</text>
</comment>
<comment type="catalytic activity">
    <reaction>
        <text>Hydrolysis of alpha-(2-&gt;3)-, alpha-(2-&gt;6)-, alpha-(2-&gt;8)- glycosidic linkages of terminal sialic acid residues in oligosaccharides, glycoproteins, glycolipids, colominic acid and synthetic substrates.</text>
        <dbReference type="EC" id="3.2.1.18"/>
    </reaction>
</comment>
<comment type="subunit">
    <text evidence="1">Interacts with cathepsin A (protective protein), beta-galactosidase and N-acetylgalactosamine-6-sulfate sulfatase in a multienzyme complex.</text>
</comment>
<comment type="subcellular location">
    <subcellularLocation>
        <location evidence="1">Lysosome membrane</location>
        <topology evidence="1">Peripheral membrane protein</topology>
        <orientation evidence="1">Lumenal side</orientation>
    </subcellularLocation>
    <subcellularLocation>
        <location evidence="1">Lysosome lumen</location>
    </subcellularLocation>
    <subcellularLocation>
        <location evidence="1">Cell membrane</location>
    </subcellularLocation>
    <subcellularLocation>
        <location evidence="1">Cytoplasmic vesicle</location>
    </subcellularLocation>
    <text evidence="1">Localized not only on the inner side of the lysosomal membrane and in the lysosomal lumen, but also on the plasma membrane and in intracellular vesicles.</text>
</comment>
<comment type="alternative products">
    <event type="alternative splicing"/>
    <isoform>
        <id>Q5RAF4-1</id>
        <name>1</name>
        <sequence type="displayed"/>
    </isoform>
    <isoform>
        <id>Q5RAF4-2</id>
        <name>2</name>
        <sequence type="described" ref="VSP_028119"/>
    </isoform>
</comment>
<comment type="domain">
    <text>A C-terminal internalization signal (YGTL) appears to allow the targeting of plasma membrane proteins to endosomes.</text>
</comment>
<comment type="PTM">
    <text evidence="1">N-glycosylated.</text>
</comment>
<comment type="PTM">
    <text evidence="1">Phosphorylation of tyrosine within the internalization signal results in inhibition of sialidase internalization and blockage on the plasma membrane.</text>
</comment>
<comment type="similarity">
    <text evidence="4">Belongs to the glycosyl hydrolase 33 family.</text>
</comment>
<accession>Q5RAF4</accession>
<accession>Q5RA14</accession>
<accession>Q5RF22</accession>
<reference key="1">
    <citation type="submission" date="2004-11" db="EMBL/GenBank/DDBJ databases">
        <authorList>
            <consortium name="The German cDNA consortium"/>
        </authorList>
    </citation>
    <scope>NUCLEOTIDE SEQUENCE [LARGE SCALE MRNA] (ISOFORMS 1 AND 2)</scope>
    <source>
        <tissue>Brain cortex</tissue>
        <tissue>Heart</tissue>
        <tissue>Kidney</tissue>
    </source>
</reference>